<gene>
    <name evidence="2" type="primary">artA</name>
    <name type="ORF">AFLA_092450</name>
</gene>
<evidence type="ECO:0000269" key="1">
    <source>
    </source>
</evidence>
<evidence type="ECO:0000303" key="2">
    <source>
    </source>
</evidence>
<evidence type="ECO:0000305" key="3"/>
<comment type="function">
    <text evidence="1">14-3-3 family protein that plays a role in the morphological differentiation and secondary metabolism biosynthesis (PubMed:29247055). Required for normal fungal morphogenesis in an environment-dependent manner, affecting the balance between production of conidiophores and the formation of sclerotia, resistant structures that are necessary for the dissemination and survival (PubMed:29247055). Acts as a positive regulator of conidiation and a negative regulator of sclerotial production (PubMed:29247055). Also regulates the production of secondary metabolites such as aflatoxin, but also the indole-tetramic acid mycotoxin cyclopiazonic acid (CPA) and ustiloxin, an inhibitor of microtubule assembly (PubMed:29247055).</text>
</comment>
<comment type="disruption phenotype">
    <text evidence="1">Diminishes colony growth and affects conidiation (PubMed:29247055). Decrease in the expression of transcription factors brlA and wetA, components of the central regulatory pathway essential for conidiophore formation (PubMed:29247055). Increases the expression of nsdC, encoding a transcription factor necessary for normal sclerotial production, ans subsequent production of sclerotia (PubMed:29247055). Also increases the production of aflatoxinvia the induction of aflatoxin cluster regulatory genes aflR, aflJ and ver1 (PubMed:29247055). Dicreases the expression of the polyketide synthase-nonribosomal peptide synthetase (PKS/NRPS) gene (AFLA_139490), essential in the synthesis of cyclopiazonic acid (CPA), and of ustD, involved in the production of ustiloxin (PubMed:29247055).</text>
</comment>
<comment type="similarity">
    <text evidence="3">Belongs to the 14-3-3 family.</text>
</comment>
<sequence length="238" mass="26869">MGHEDAVYLAKLAEQAERYEEMVENMKVVASADVELTVEERNLLSVAYKNVIGARRASWRIVTSIEQKEESKGNESQVTLIKEYRQKIESELAKICDDILEVLDKHLIPSAQSGESKVFYHKMKGDYHRYLAEFAIGDRRKGAADASLEAYKAATEVAQTDLAPTHPIRLGLALNFSVFYYEILNSPDQACHLAKLAFDDAIAELDTLSEESYKDSTLIMQLLRDNLTLWTSSEPSRC</sequence>
<name>ARTA_ASPFN</name>
<dbReference type="EMBL" id="EQ963480">
    <property type="protein sequence ID" value="EED49164.1"/>
    <property type="molecule type" value="Genomic_DNA"/>
</dbReference>
<dbReference type="RefSeq" id="XP_002381065.1">
    <property type="nucleotide sequence ID" value="XM_002381024.1"/>
</dbReference>
<dbReference type="SMR" id="B8NLM9"/>
<dbReference type="STRING" id="332952.B8NLM9"/>
<dbReference type="EnsemblFungi" id="EED49164">
    <property type="protein sequence ID" value="EED49164"/>
    <property type="gene ID" value="AFLA_092450"/>
</dbReference>
<dbReference type="VEuPathDB" id="FungiDB:AFLA_009479"/>
<dbReference type="eggNOG" id="KOG0841">
    <property type="taxonomic scope" value="Eukaryota"/>
</dbReference>
<dbReference type="HOGENOM" id="CLU_058290_0_0_1"/>
<dbReference type="OMA" id="KGCQLAR"/>
<dbReference type="CDD" id="cd11309">
    <property type="entry name" value="14-3-3_fungi"/>
    <property type="match status" value="1"/>
</dbReference>
<dbReference type="FunFam" id="1.20.190.20:FF:000002">
    <property type="entry name" value="14-3-3 protein epsilon"/>
    <property type="match status" value="1"/>
</dbReference>
<dbReference type="Gene3D" id="1.20.190.20">
    <property type="entry name" value="14-3-3 domain"/>
    <property type="match status" value="1"/>
</dbReference>
<dbReference type="InterPro" id="IPR000308">
    <property type="entry name" value="14-3-3"/>
</dbReference>
<dbReference type="InterPro" id="IPR023409">
    <property type="entry name" value="14-3-3_CS"/>
</dbReference>
<dbReference type="InterPro" id="IPR036815">
    <property type="entry name" value="14-3-3_dom_sf"/>
</dbReference>
<dbReference type="InterPro" id="IPR023410">
    <property type="entry name" value="14-3-3_domain"/>
</dbReference>
<dbReference type="PANTHER" id="PTHR18860">
    <property type="entry name" value="14-3-3 PROTEIN"/>
    <property type="match status" value="1"/>
</dbReference>
<dbReference type="Pfam" id="PF00244">
    <property type="entry name" value="14-3-3"/>
    <property type="match status" value="1"/>
</dbReference>
<dbReference type="PIRSF" id="PIRSF000868">
    <property type="entry name" value="14-3-3"/>
    <property type="match status" value="1"/>
</dbReference>
<dbReference type="PRINTS" id="PR00305">
    <property type="entry name" value="1433ZETA"/>
</dbReference>
<dbReference type="SMART" id="SM00101">
    <property type="entry name" value="14_3_3"/>
    <property type="match status" value="1"/>
</dbReference>
<dbReference type="SUPFAM" id="SSF48445">
    <property type="entry name" value="14-3-3 protein"/>
    <property type="match status" value="1"/>
</dbReference>
<dbReference type="PROSITE" id="PS00796">
    <property type="entry name" value="1433_1"/>
    <property type="match status" value="1"/>
</dbReference>
<dbReference type="PROSITE" id="PS00797">
    <property type="entry name" value="1433_2"/>
    <property type="match status" value="1"/>
</dbReference>
<protein>
    <recommendedName>
        <fullName evidence="2">14-3-3 family protein artA</fullName>
    </recommendedName>
</protein>
<feature type="chain" id="PRO_0000443855" description="14-3-3 family protein artA">
    <location>
        <begin position="1"/>
        <end position="238"/>
    </location>
</feature>
<accession>B8NLM9</accession>
<proteinExistence type="inferred from homology"/>
<reference key="1">
    <citation type="journal article" date="2015" name="Genome Announc.">
        <title>Genome sequence of Aspergillus flavus NRRL 3357, a strain that causes aflatoxin contamination of food and feed.</title>
        <authorList>
            <person name="Nierman W.C."/>
            <person name="Yu J."/>
            <person name="Fedorova-Abrams N.D."/>
            <person name="Losada L."/>
            <person name="Cleveland T.E."/>
            <person name="Bhatnagar D."/>
            <person name="Bennett J.W."/>
            <person name="Dean R."/>
            <person name="Payne G.A."/>
        </authorList>
    </citation>
    <scope>NUCLEOTIDE SEQUENCE [LARGE SCALE GENOMIC DNA]</scope>
    <source>
        <strain>ATCC 200026 / FGSC A1120 / IAM 13836 / NRRL 3357 / JCM 12722 / SRRC 167</strain>
    </source>
</reference>
<reference key="2">
    <citation type="journal article" date="2018" name="Appl. Environ. Microbiol.">
        <title>The 14-3-3 protein homolog ArtA regulates development and secondary metabolism in the opportunistic plant pathogen Aspergillus flavus.</title>
        <authorList>
            <person name="Ibarra B.A."/>
            <person name="Lohmar J.M."/>
            <person name="Satterlee T."/>
            <person name="McDonald T."/>
            <person name="Cary J.W."/>
            <person name="Calvo A.M."/>
        </authorList>
    </citation>
    <scope>FUNCTION</scope>
    <scope>DISRUPTION PHENOTYPE</scope>
</reference>
<organism>
    <name type="scientific">Aspergillus flavus (strain ATCC 200026 / FGSC A1120 / IAM 13836 / NRRL 3357 / JCM 12722 / SRRC 167)</name>
    <dbReference type="NCBI Taxonomy" id="332952"/>
    <lineage>
        <taxon>Eukaryota</taxon>
        <taxon>Fungi</taxon>
        <taxon>Dikarya</taxon>
        <taxon>Ascomycota</taxon>
        <taxon>Pezizomycotina</taxon>
        <taxon>Eurotiomycetes</taxon>
        <taxon>Eurotiomycetidae</taxon>
        <taxon>Eurotiales</taxon>
        <taxon>Aspergillaceae</taxon>
        <taxon>Aspergillus</taxon>
        <taxon>Aspergillus subgen. Circumdati</taxon>
    </lineage>
</organism>